<gene>
    <name type="primary">eamB</name>
    <name type="ordered locus">SPA0273</name>
</gene>
<organism>
    <name type="scientific">Salmonella paratyphi A (strain ATCC 9150 / SARB42)</name>
    <dbReference type="NCBI Taxonomy" id="295319"/>
    <lineage>
        <taxon>Bacteria</taxon>
        <taxon>Pseudomonadati</taxon>
        <taxon>Pseudomonadota</taxon>
        <taxon>Gammaproteobacteria</taxon>
        <taxon>Enterobacterales</taxon>
        <taxon>Enterobacteriaceae</taxon>
        <taxon>Salmonella</taxon>
    </lineage>
</organism>
<sequence length="195" mass="21335">MTPMLLSAFWTYTLITALTPGPNNILALSAATAHGFRQSIRVLAGMSLGFLVVMLLCAGIAFSLAVIDPAIIHLLSWVGAAYILWLAWKIATSPAADEKVRPKPVGFWVSFGLQFVNVKIILYGITALSTFVLPQTQALNWVIGVSILLALIGTFGNVCWALAGHLFQRAFRHYGRQLNIILALLLVYCAVRIFY</sequence>
<comment type="function">
    <text evidence="1">Exporter of O-acetylserine (OAS) and cysteine.</text>
</comment>
<comment type="catalytic activity">
    <reaction evidence="1">
        <text>O-acetyl-L-serine(in) = O-acetyl-L-serine(out)</text>
        <dbReference type="Rhea" id="RHEA:29659"/>
        <dbReference type="ChEBI" id="CHEBI:58340"/>
    </reaction>
    <physiologicalReaction direction="left-to-right" evidence="1">
        <dbReference type="Rhea" id="RHEA:29660"/>
    </physiologicalReaction>
</comment>
<comment type="catalytic activity">
    <reaction evidence="1">
        <text>L-cysteine(in) = L-cysteine(out)</text>
        <dbReference type="Rhea" id="RHEA:29655"/>
        <dbReference type="ChEBI" id="CHEBI:35235"/>
    </reaction>
    <physiologicalReaction direction="left-to-right" evidence="1">
        <dbReference type="Rhea" id="RHEA:29656"/>
    </physiologicalReaction>
</comment>
<comment type="subcellular location">
    <subcellularLocation>
        <location evidence="1">Cell inner membrane</location>
        <topology evidence="2">Multi-pass membrane protein</topology>
    </subcellularLocation>
</comment>
<comment type="similarity">
    <text evidence="3">Belongs to the Rht family.</text>
</comment>
<protein>
    <recommendedName>
        <fullName evidence="1">Cysteine/O-acetylserine efflux protein</fullName>
    </recommendedName>
</protein>
<dbReference type="EMBL" id="CP000026">
    <property type="protein sequence ID" value="AAV76295.1"/>
    <property type="molecule type" value="Genomic_DNA"/>
</dbReference>
<dbReference type="RefSeq" id="WP_000188410.1">
    <property type="nucleotide sequence ID" value="NC_006511.1"/>
</dbReference>
<dbReference type="KEGG" id="spt:SPA0273"/>
<dbReference type="HOGENOM" id="CLU_079569_1_2_6"/>
<dbReference type="Proteomes" id="UP000008185">
    <property type="component" value="Chromosome"/>
</dbReference>
<dbReference type="GO" id="GO:0005886">
    <property type="term" value="C:plasma membrane"/>
    <property type="evidence" value="ECO:0007669"/>
    <property type="project" value="UniProtKB-SubCell"/>
</dbReference>
<dbReference type="GO" id="GO:0015171">
    <property type="term" value="F:amino acid transmembrane transporter activity"/>
    <property type="evidence" value="ECO:0007669"/>
    <property type="project" value="TreeGrafter"/>
</dbReference>
<dbReference type="GO" id="GO:0033228">
    <property type="term" value="P:cysteine export across plasma membrane"/>
    <property type="evidence" value="ECO:0007669"/>
    <property type="project" value="TreeGrafter"/>
</dbReference>
<dbReference type="InterPro" id="IPR001123">
    <property type="entry name" value="LeuE-type"/>
</dbReference>
<dbReference type="NCBIfam" id="NF007653">
    <property type="entry name" value="PRK10323.1"/>
    <property type="match status" value="1"/>
</dbReference>
<dbReference type="PANTHER" id="PTHR30086">
    <property type="entry name" value="ARGININE EXPORTER PROTEIN ARGO"/>
    <property type="match status" value="1"/>
</dbReference>
<dbReference type="PANTHER" id="PTHR30086:SF20">
    <property type="entry name" value="ARGININE EXPORTER PROTEIN ARGO-RELATED"/>
    <property type="match status" value="1"/>
</dbReference>
<dbReference type="Pfam" id="PF01810">
    <property type="entry name" value="LysE"/>
    <property type="match status" value="1"/>
</dbReference>
<reference key="1">
    <citation type="journal article" date="2004" name="Nat. Genet.">
        <title>Comparison of genome degradation in Paratyphi A and Typhi, human-restricted serovars of Salmonella enterica that cause typhoid.</title>
        <authorList>
            <person name="McClelland M."/>
            <person name="Sanderson K.E."/>
            <person name="Clifton S.W."/>
            <person name="Latreille P."/>
            <person name="Porwollik S."/>
            <person name="Sabo A."/>
            <person name="Meyer R."/>
            <person name="Bieri T."/>
            <person name="Ozersky P."/>
            <person name="McLellan M."/>
            <person name="Harkins C.R."/>
            <person name="Wang C."/>
            <person name="Nguyen C."/>
            <person name="Berghoff A."/>
            <person name="Elliott G."/>
            <person name="Kohlberg S."/>
            <person name="Strong C."/>
            <person name="Du F."/>
            <person name="Carter J."/>
            <person name="Kremizki C."/>
            <person name="Layman D."/>
            <person name="Leonard S."/>
            <person name="Sun H."/>
            <person name="Fulton L."/>
            <person name="Nash W."/>
            <person name="Miner T."/>
            <person name="Minx P."/>
            <person name="Delehaunty K."/>
            <person name="Fronick C."/>
            <person name="Magrini V."/>
            <person name="Nhan M."/>
            <person name="Warren W."/>
            <person name="Florea L."/>
            <person name="Spieth J."/>
            <person name="Wilson R.K."/>
        </authorList>
    </citation>
    <scope>NUCLEOTIDE SEQUENCE [LARGE SCALE GENOMIC DNA]</scope>
    <source>
        <strain>ATCC 9150 / SARB42</strain>
    </source>
</reference>
<feature type="chain" id="PRO_0000318729" description="Cysteine/O-acetylserine efflux protein">
    <location>
        <begin position="1"/>
        <end position="195"/>
    </location>
</feature>
<feature type="topological domain" description="Periplasmic" evidence="2">
    <location>
        <begin position="1"/>
        <end position="9"/>
    </location>
</feature>
<feature type="transmembrane region" description="Helical" evidence="2">
    <location>
        <begin position="10"/>
        <end position="32"/>
    </location>
</feature>
<feature type="topological domain" description="Cytoplasmic" evidence="2">
    <location>
        <begin position="33"/>
        <end position="46"/>
    </location>
</feature>
<feature type="transmembrane region" description="Helical" evidence="2">
    <location>
        <begin position="47"/>
        <end position="67"/>
    </location>
</feature>
<feature type="topological domain" description="Periplasmic" evidence="2">
    <location>
        <begin position="68"/>
        <end position="69"/>
    </location>
</feature>
<feature type="transmembrane region" description="Helical" evidence="2">
    <location>
        <begin position="70"/>
        <end position="90"/>
    </location>
</feature>
<feature type="topological domain" description="Cytoplasmic" evidence="2">
    <location>
        <begin position="91"/>
        <end position="104"/>
    </location>
</feature>
<feature type="transmembrane region" description="Helical" evidence="2">
    <location>
        <begin position="105"/>
        <end position="125"/>
    </location>
</feature>
<feature type="topological domain" description="Periplasmic" evidence="2">
    <location>
        <begin position="126"/>
        <end position="141"/>
    </location>
</feature>
<feature type="transmembrane region" description="Helical" evidence="2">
    <location>
        <begin position="142"/>
        <end position="162"/>
    </location>
</feature>
<feature type="topological domain" description="Cytoplasmic" evidence="2">
    <location>
        <begin position="163"/>
        <end position="176"/>
    </location>
</feature>
<feature type="transmembrane region" description="Helical" evidence="2">
    <location>
        <begin position="177"/>
        <end position="194"/>
    </location>
</feature>
<feature type="topological domain" description="Periplasmic" evidence="1">
    <location>
        <position position="195"/>
    </location>
</feature>
<accession>Q5PNB4</accession>
<evidence type="ECO:0000250" key="1">
    <source>
        <dbReference type="UniProtKB" id="P38101"/>
    </source>
</evidence>
<evidence type="ECO:0000255" key="2"/>
<evidence type="ECO:0000305" key="3"/>
<proteinExistence type="inferred from homology"/>
<name>EAMB_SALPA</name>
<keyword id="KW-0029">Amino-acid transport</keyword>
<keyword id="KW-0997">Cell inner membrane</keyword>
<keyword id="KW-1003">Cell membrane</keyword>
<keyword id="KW-0472">Membrane</keyword>
<keyword id="KW-0812">Transmembrane</keyword>
<keyword id="KW-1133">Transmembrane helix</keyword>
<keyword id="KW-0813">Transport</keyword>